<keyword id="KW-0903">Direct protein sequencing</keyword>
<keyword id="KW-1015">Disulfide bond</keyword>
<keyword id="KW-0272">Extracellular matrix</keyword>
<keyword id="KW-0430">Lectin</keyword>
<keyword id="KW-0964">Secreted</keyword>
<evidence type="ECO:0000250" key="1">
    <source>
        <dbReference type="UniProtKB" id="Q9PRS8"/>
    </source>
</evidence>
<evidence type="ECO:0000255" key="2">
    <source>
        <dbReference type="PROSITE-ProRule" id="PRU00040"/>
    </source>
</evidence>
<evidence type="ECO:0000269" key="3">
    <source>
    </source>
</evidence>
<evidence type="ECO:0000269" key="4">
    <source>
    </source>
</evidence>
<evidence type="ECO:0000305" key="5"/>
<protein>
    <recommendedName>
        <fullName>Rheacalcin-1</fullName>
        <shortName>RCA-1</shortName>
    </recommendedName>
</protein>
<name>RCAL1_RHEAM</name>
<comment type="subcellular location">
    <subcellularLocation>
        <location>Secreted</location>
        <location>Extracellular space</location>
        <location>Extracellular matrix</location>
    </subcellularLocation>
    <text>Eggshell matrix.</text>
</comment>
<comment type="mass spectrometry"/>
<dbReference type="SMR" id="P84617"/>
<dbReference type="GO" id="GO:0005576">
    <property type="term" value="C:extracellular region"/>
    <property type="evidence" value="ECO:0007669"/>
    <property type="project" value="UniProtKB-KW"/>
</dbReference>
<dbReference type="GO" id="GO:0030246">
    <property type="term" value="F:carbohydrate binding"/>
    <property type="evidence" value="ECO:0007669"/>
    <property type="project" value="UniProtKB-KW"/>
</dbReference>
<dbReference type="CDD" id="cd03594">
    <property type="entry name" value="CLECT_REG-1_like"/>
    <property type="match status" value="1"/>
</dbReference>
<dbReference type="Gene3D" id="3.10.100.10">
    <property type="entry name" value="Mannose-Binding Protein A, subunit A"/>
    <property type="match status" value="1"/>
</dbReference>
<dbReference type="InterPro" id="IPR001304">
    <property type="entry name" value="C-type_lectin-like"/>
</dbReference>
<dbReference type="InterPro" id="IPR016186">
    <property type="entry name" value="C-type_lectin-like/link_sf"/>
</dbReference>
<dbReference type="InterPro" id="IPR050111">
    <property type="entry name" value="C-type_lectin/snaclec_domain"/>
</dbReference>
<dbReference type="InterPro" id="IPR018378">
    <property type="entry name" value="C-type_lectin_CS"/>
</dbReference>
<dbReference type="InterPro" id="IPR016187">
    <property type="entry name" value="CTDL_fold"/>
</dbReference>
<dbReference type="PANTHER" id="PTHR22803">
    <property type="entry name" value="MANNOSE, PHOSPHOLIPASE, LECTIN RECEPTOR RELATED"/>
    <property type="match status" value="1"/>
</dbReference>
<dbReference type="Pfam" id="PF00059">
    <property type="entry name" value="Lectin_C"/>
    <property type="match status" value="1"/>
</dbReference>
<dbReference type="PRINTS" id="PR01504">
    <property type="entry name" value="PNCREATITSAP"/>
</dbReference>
<dbReference type="SMART" id="SM00034">
    <property type="entry name" value="CLECT"/>
    <property type="match status" value="1"/>
</dbReference>
<dbReference type="SUPFAM" id="SSF56436">
    <property type="entry name" value="C-type lectin-like"/>
    <property type="match status" value="1"/>
</dbReference>
<dbReference type="PROSITE" id="PS00615">
    <property type="entry name" value="C_TYPE_LECTIN_1"/>
    <property type="match status" value="1"/>
</dbReference>
<dbReference type="PROSITE" id="PS50041">
    <property type="entry name" value="C_TYPE_LECTIN_2"/>
    <property type="match status" value="1"/>
</dbReference>
<sequence>VRANRCLKGWLDFRGNCYGYFRQELPWRKAEAWCRVVRGGCHLASIHTSEEHRAVAKFISQCRRGEEGDDVWIGLYHWNKSWSWIDGSKMHYSAWDDDDFSKGQYCAALEDSSGFLSWEDDACSERNAFICKCAA</sequence>
<organism>
    <name type="scientific">Rhea americana</name>
    <name type="common">Greater rhea</name>
    <name type="synonym">Common rhea</name>
    <dbReference type="NCBI Taxonomy" id="8797"/>
    <lineage>
        <taxon>Eukaryota</taxon>
        <taxon>Metazoa</taxon>
        <taxon>Chordata</taxon>
        <taxon>Craniata</taxon>
        <taxon>Vertebrata</taxon>
        <taxon>Euteleostomi</taxon>
        <taxon>Archelosauria</taxon>
        <taxon>Archosauria</taxon>
        <taxon>Dinosauria</taxon>
        <taxon>Saurischia</taxon>
        <taxon>Theropoda</taxon>
        <taxon>Coelurosauria</taxon>
        <taxon>Aves</taxon>
        <taxon>Palaeognathae</taxon>
        <taxon>Rheiformes</taxon>
        <taxon>Rheidae</taxon>
        <taxon>Rhea</taxon>
    </lineage>
</organism>
<accession>P84617</accession>
<feature type="chain" id="PRO_0000046718" description="Rheacalcin-1">
    <location>
        <begin position="1"/>
        <end position="135"/>
    </location>
</feature>
<feature type="domain" description="C-type lectin" evidence="2">
    <location>
        <begin position="13"/>
        <end position="132"/>
    </location>
</feature>
<feature type="disulfide bond" evidence="1 2">
    <location>
        <begin position="6"/>
        <end position="17"/>
    </location>
</feature>
<feature type="disulfide bond" evidence="1 2">
    <location>
        <begin position="34"/>
        <end position="131"/>
    </location>
</feature>
<feature type="disulfide bond" evidence="1 2">
    <location>
        <begin position="106"/>
        <end position="123"/>
    </location>
</feature>
<proteinExistence type="evidence at protein level"/>
<reference key="1">
    <citation type="journal article" date="2006" name="Comp. Biochem. Physiol.">
        <title>Amino acid sequences and phosphorylation sites of emu and rhea eggshell C-type lectin-like proteins.</title>
        <authorList>
            <person name="Mann K."/>
            <person name="Siedler F."/>
        </authorList>
    </citation>
    <scope>PROTEIN SEQUENCE</scope>
    <scope>MASS SPECTROMETRY</scope>
    <source>
        <tissue>Eggshell matrix</tissue>
    </source>
</reference>
<reference evidence="5" key="2">
    <citation type="journal article" date="2004" name="Br. Poult. Sci.">
        <title>Identification of the major proteins of the organic matrix of emu (Dromaius novaehollandiae) and rhea (Rhea americana) eggshell calcified layer.</title>
        <authorList>
            <person name="Mann K."/>
        </authorList>
    </citation>
    <scope>PROTEIN SEQUENCE OF 1-30</scope>
    <source>
        <tissue evidence="3">Eggshell matrix</tissue>
    </source>
</reference>